<proteinExistence type="evidence at protein level"/>
<keyword id="KW-1185">Reference proteome</keyword>
<keyword id="KW-0946">Virion</keyword>
<protein>
    <recommendedName>
        <fullName>Uncharacterized protein R648</fullName>
    </recommendedName>
</protein>
<sequence>MMDNMQCGYYNSGSPYNFPSVLGPGAAIGPGPVPLGYCKEPCPTRSLCDPSYIGACGIQPLINPFGPRRAVTTWKINYLVSNRTNQAAHTDPDLINPWGIAIFGNQLWIANGQTDTITNYDLFGNKLLGSITVRNIAQNSSYPTGIAINCTGNFATTNGTLTKSGLFLTCSEHGTVHSYNPQVDPLVSFLVLNEQLTGEIHVFRGLAVAGDVLYLADFFQSKIMVFDSNYNRLLGFPFVDGDTSDPIPISYGPTNIVNIGCYLYVVYARKDPNVPLQAITGAGFGYISIFNLDGTFVRRFTSRGVLNDPWAIIPAPVECGFPPGSLLVSNHGDGRINAFDCNGRYVGPMLNQSGLPVIIDGLRGLAPHYTDFNEIFFTAEVDENIDGLVGSICKDQVIYF</sequence>
<evidence type="ECO:0000269" key="1">
    <source>
    </source>
</evidence>
<evidence type="ECO:0000305" key="2"/>
<gene>
    <name type="ordered locus">MIMI_R648</name>
</gene>
<reference key="1">
    <citation type="journal article" date="2004" name="Science">
        <title>The 1.2-megabase genome sequence of Mimivirus.</title>
        <authorList>
            <person name="Raoult D."/>
            <person name="Audic S."/>
            <person name="Robert C."/>
            <person name="Abergel C."/>
            <person name="Renesto P."/>
            <person name="Ogata H."/>
            <person name="La Scola B."/>
            <person name="Susan M."/>
            <person name="Claverie J.-M."/>
        </authorList>
    </citation>
    <scope>NUCLEOTIDE SEQUENCE [LARGE SCALE GENOMIC DNA]</scope>
    <source>
        <strain>Rowbotham-Bradford</strain>
    </source>
</reference>
<reference key="2">
    <citation type="journal article" date="2006" name="J. Virol.">
        <title>Mimivirus giant particles incorporate a large fraction of anonymous and unique gene products.</title>
        <authorList>
            <person name="Renesto P."/>
            <person name="Abergel C."/>
            <person name="Decloquement P."/>
            <person name="Moinier D."/>
            <person name="Azza S."/>
            <person name="Ogata H."/>
            <person name="Fourquet P."/>
            <person name="Gorvel J.-P."/>
            <person name="Claverie J.-M."/>
            <person name="Raoult D."/>
        </authorList>
    </citation>
    <scope>IDENTIFICATION BY MASS SPECTROMETRY [LARGE SCALE ANALYSIS]</scope>
    <scope>SUBCELLULAR LOCATION</scope>
</reference>
<comment type="subcellular location">
    <subcellularLocation>
        <location evidence="1">Virion</location>
    </subcellularLocation>
</comment>
<comment type="similarity">
    <text evidence="2">Belongs to the mimivirus R640 family.</text>
</comment>
<name>YR648_MIMIV</name>
<feature type="chain" id="PRO_0000071303" description="Uncharacterized protein R648">
    <location>
        <begin position="1"/>
        <end position="400"/>
    </location>
</feature>
<dbReference type="EMBL" id="AY653733">
    <property type="protein sequence ID" value="AAV50909.1"/>
    <property type="molecule type" value="Genomic_DNA"/>
</dbReference>
<dbReference type="SMR" id="Q5UR09"/>
<dbReference type="KEGG" id="vg:9925292"/>
<dbReference type="Proteomes" id="UP000001134">
    <property type="component" value="Genome"/>
</dbReference>
<dbReference type="GO" id="GO:0044423">
    <property type="term" value="C:virion component"/>
    <property type="evidence" value="ECO:0007669"/>
    <property type="project" value="UniProtKB-KW"/>
</dbReference>
<dbReference type="Gene3D" id="2.130.10.10">
    <property type="entry name" value="YVTN repeat-like/Quinoprotein amine dehydrogenase"/>
    <property type="match status" value="1"/>
</dbReference>
<dbReference type="InterPro" id="IPR017549">
    <property type="entry name" value="APMV_L690"/>
</dbReference>
<dbReference type="InterPro" id="IPR015943">
    <property type="entry name" value="WD40/YVTN_repeat-like_dom_sf"/>
</dbReference>
<dbReference type="NCBIfam" id="TIGR03118">
    <property type="entry name" value="PEPCTERM_chp_1"/>
    <property type="match status" value="1"/>
</dbReference>
<dbReference type="SUPFAM" id="SSF101898">
    <property type="entry name" value="NHL repeat"/>
    <property type="match status" value="1"/>
</dbReference>
<accession>Q5UR09</accession>
<organismHost>
    <name type="scientific">Acanthamoeba polyphaga</name>
    <name type="common">Amoeba</name>
    <dbReference type="NCBI Taxonomy" id="5757"/>
</organismHost>
<organism>
    <name type="scientific">Acanthamoeba polyphaga mimivirus</name>
    <name type="common">APMV</name>
    <dbReference type="NCBI Taxonomy" id="212035"/>
    <lineage>
        <taxon>Viruses</taxon>
        <taxon>Varidnaviria</taxon>
        <taxon>Bamfordvirae</taxon>
        <taxon>Nucleocytoviricota</taxon>
        <taxon>Megaviricetes</taxon>
        <taxon>Imitervirales</taxon>
        <taxon>Mimiviridae</taxon>
        <taxon>Megamimivirinae</taxon>
        <taxon>Mimivirus</taxon>
        <taxon>Mimivirus bradfordmassiliense</taxon>
    </lineage>
</organism>